<protein>
    <recommendedName>
        <fullName>E3 ubiquitin-protein ligase Praja-1</fullName>
        <shortName>Praja1</shortName>
        <ecNumber>2.3.2.27</ecNumber>
    </recommendedName>
    <alternativeName>
        <fullName evidence="8">RING-type E3 ubiquitin transferase Praja-1</fullName>
    </alternativeName>
</protein>
<organism>
    <name type="scientific">Mus musculus</name>
    <name type="common">Mouse</name>
    <dbReference type="NCBI Taxonomy" id="10090"/>
    <lineage>
        <taxon>Eukaryota</taxon>
        <taxon>Metazoa</taxon>
        <taxon>Chordata</taxon>
        <taxon>Craniata</taxon>
        <taxon>Vertebrata</taxon>
        <taxon>Euteleostomi</taxon>
        <taxon>Mammalia</taxon>
        <taxon>Eutheria</taxon>
        <taxon>Euarchontoglires</taxon>
        <taxon>Glires</taxon>
        <taxon>Rodentia</taxon>
        <taxon>Myomorpha</taxon>
        <taxon>Muroidea</taxon>
        <taxon>Muridae</taxon>
        <taxon>Murinae</taxon>
        <taxon>Mus</taxon>
        <taxon>Mus</taxon>
    </lineage>
</organism>
<proteinExistence type="evidence at protein level"/>
<sequence length="578" mass="63906">MSHQERIASQRRTTAEVPMHRSTANQSKRSRSPFASTRRRWDDSESSGASLAVESEDYSRYPPREYRASGSRRGLAYGHIDTVVARDSEEEGAGPVDRLPVRGKAGKFKDDPEKGARSSRFTSVNHDAKEECGKVESPPAARCSARRAELSKQNGSSASQISSAEGRAAAKGNNSLERERQNLPARPSRAPVSICGGGENTPKSAEEPVVRPKVRNVATPNCMKPKVFFDTDDDDDVPHSTSRWRDAADAEEAHAEGLARRGRGEAASSSEPRYAEDQDARSEQAKADKVPRRRRTMADPDFWAYTDDYYRYYEEDSDSDKEWMAALRRKYRSREQPQSSSGESWELLPGKEELERQQAGAGSLASAGSNGSGYPEEVQDPSLQEEEQASLEEGEIPWLRYNENESSSEGDNESTHELIQPGMFMLDGNNNLEDDSSVSEDLEVDWSLFDGFADGLGVAEAISYVDPQFLTYMALEERLAQAMETALAHLESLAVDVEVANPPASKESIDALPEILVTEDHGAVGQEMCCPICCSEYVKGEVATELPCHHYFHKPCVSIWLQKSGTCPVCRCMFPPPL</sequence>
<reference key="1">
    <citation type="journal article" date="1997" name="Oncogene">
        <title>Praja1, a novel gene encoding a RING-H2 motif in mouse development.</title>
        <authorList>
            <person name="Mishra L."/>
            <person name="Tully R.E."/>
            <person name="Monga S.P.S."/>
            <person name="Yu P."/>
            <person name="Cai T."/>
            <person name="Makalowski W."/>
            <person name="Mezey E."/>
            <person name="Pavan W.J."/>
            <person name="Mishra B."/>
        </authorList>
    </citation>
    <scope>NUCLEOTIDE SEQUENCE [MRNA] (ISOFORM 2)</scope>
    <source>
        <strain>C57BL/6J</strain>
        <tissue>Embryo</tissue>
    </source>
</reference>
<reference key="2">
    <citation type="submission" date="2004-07" db="EMBL/GenBank/DDBJ databases">
        <authorList>
            <person name="Mishra L."/>
        </authorList>
    </citation>
    <scope>SEQUENCE REVISION</scope>
</reference>
<reference key="3">
    <citation type="journal article" date="2001" name="Learn. Memory">
        <title>Identification of genes expressed in the amygdala during the formation of fear memory.</title>
        <authorList>
            <person name="Stork O."/>
            <person name="Stork S."/>
            <person name="Pape H.-C."/>
            <person name="Obata K."/>
        </authorList>
    </citation>
    <scope>NUCLEOTIDE SEQUENCE [MRNA] (ISOFORMS 1; 3 AND 4)</scope>
    <source>
        <strain>C57BL/6J</strain>
        <tissue>Amygdala</tissue>
    </source>
</reference>
<reference key="4">
    <citation type="submission" date="2006-08" db="EMBL/GenBank/DDBJ databases">
        <authorList>
            <person name="Stork O."/>
            <person name="Stork S."/>
        </authorList>
    </citation>
    <scope>SEQUENCE REVISION TO C-TERMINUS (ISOFORMS 1 AND 3)</scope>
</reference>
<reference key="5">
    <citation type="journal article" date="2005" name="Science">
        <title>The transcriptional landscape of the mammalian genome.</title>
        <authorList>
            <person name="Carninci P."/>
            <person name="Kasukawa T."/>
            <person name="Katayama S."/>
            <person name="Gough J."/>
            <person name="Frith M.C."/>
            <person name="Maeda N."/>
            <person name="Oyama R."/>
            <person name="Ravasi T."/>
            <person name="Lenhard B."/>
            <person name="Wells C."/>
            <person name="Kodzius R."/>
            <person name="Shimokawa K."/>
            <person name="Bajic V.B."/>
            <person name="Brenner S.E."/>
            <person name="Batalov S."/>
            <person name="Forrest A.R."/>
            <person name="Zavolan M."/>
            <person name="Davis M.J."/>
            <person name="Wilming L.G."/>
            <person name="Aidinis V."/>
            <person name="Allen J.E."/>
            <person name="Ambesi-Impiombato A."/>
            <person name="Apweiler R."/>
            <person name="Aturaliya R.N."/>
            <person name="Bailey T.L."/>
            <person name="Bansal M."/>
            <person name="Baxter L."/>
            <person name="Beisel K.W."/>
            <person name="Bersano T."/>
            <person name="Bono H."/>
            <person name="Chalk A.M."/>
            <person name="Chiu K.P."/>
            <person name="Choudhary V."/>
            <person name="Christoffels A."/>
            <person name="Clutterbuck D.R."/>
            <person name="Crowe M.L."/>
            <person name="Dalla E."/>
            <person name="Dalrymple B.P."/>
            <person name="de Bono B."/>
            <person name="Della Gatta G."/>
            <person name="di Bernardo D."/>
            <person name="Down T."/>
            <person name="Engstrom P."/>
            <person name="Fagiolini M."/>
            <person name="Faulkner G."/>
            <person name="Fletcher C.F."/>
            <person name="Fukushima T."/>
            <person name="Furuno M."/>
            <person name="Futaki S."/>
            <person name="Gariboldi M."/>
            <person name="Georgii-Hemming P."/>
            <person name="Gingeras T.R."/>
            <person name="Gojobori T."/>
            <person name="Green R.E."/>
            <person name="Gustincich S."/>
            <person name="Harbers M."/>
            <person name="Hayashi Y."/>
            <person name="Hensch T.K."/>
            <person name="Hirokawa N."/>
            <person name="Hill D."/>
            <person name="Huminiecki L."/>
            <person name="Iacono M."/>
            <person name="Ikeo K."/>
            <person name="Iwama A."/>
            <person name="Ishikawa T."/>
            <person name="Jakt M."/>
            <person name="Kanapin A."/>
            <person name="Katoh M."/>
            <person name="Kawasawa Y."/>
            <person name="Kelso J."/>
            <person name="Kitamura H."/>
            <person name="Kitano H."/>
            <person name="Kollias G."/>
            <person name="Krishnan S.P."/>
            <person name="Kruger A."/>
            <person name="Kummerfeld S.K."/>
            <person name="Kurochkin I.V."/>
            <person name="Lareau L.F."/>
            <person name="Lazarevic D."/>
            <person name="Lipovich L."/>
            <person name="Liu J."/>
            <person name="Liuni S."/>
            <person name="McWilliam S."/>
            <person name="Madan Babu M."/>
            <person name="Madera M."/>
            <person name="Marchionni L."/>
            <person name="Matsuda H."/>
            <person name="Matsuzawa S."/>
            <person name="Miki H."/>
            <person name="Mignone F."/>
            <person name="Miyake S."/>
            <person name="Morris K."/>
            <person name="Mottagui-Tabar S."/>
            <person name="Mulder N."/>
            <person name="Nakano N."/>
            <person name="Nakauchi H."/>
            <person name="Ng P."/>
            <person name="Nilsson R."/>
            <person name="Nishiguchi S."/>
            <person name="Nishikawa S."/>
            <person name="Nori F."/>
            <person name="Ohara O."/>
            <person name="Okazaki Y."/>
            <person name="Orlando V."/>
            <person name="Pang K.C."/>
            <person name="Pavan W.J."/>
            <person name="Pavesi G."/>
            <person name="Pesole G."/>
            <person name="Petrovsky N."/>
            <person name="Piazza S."/>
            <person name="Reed J."/>
            <person name="Reid J.F."/>
            <person name="Ring B.Z."/>
            <person name="Ringwald M."/>
            <person name="Rost B."/>
            <person name="Ruan Y."/>
            <person name="Salzberg S.L."/>
            <person name="Sandelin A."/>
            <person name="Schneider C."/>
            <person name="Schoenbach C."/>
            <person name="Sekiguchi K."/>
            <person name="Semple C.A."/>
            <person name="Seno S."/>
            <person name="Sessa L."/>
            <person name="Sheng Y."/>
            <person name="Shibata Y."/>
            <person name="Shimada H."/>
            <person name="Shimada K."/>
            <person name="Silva D."/>
            <person name="Sinclair B."/>
            <person name="Sperling S."/>
            <person name="Stupka E."/>
            <person name="Sugiura K."/>
            <person name="Sultana R."/>
            <person name="Takenaka Y."/>
            <person name="Taki K."/>
            <person name="Tammoja K."/>
            <person name="Tan S.L."/>
            <person name="Tang S."/>
            <person name="Taylor M.S."/>
            <person name="Tegner J."/>
            <person name="Teichmann S.A."/>
            <person name="Ueda H.R."/>
            <person name="van Nimwegen E."/>
            <person name="Verardo R."/>
            <person name="Wei C.L."/>
            <person name="Yagi K."/>
            <person name="Yamanishi H."/>
            <person name="Zabarovsky E."/>
            <person name="Zhu S."/>
            <person name="Zimmer A."/>
            <person name="Hide W."/>
            <person name="Bult C."/>
            <person name="Grimmond S.M."/>
            <person name="Teasdale R.D."/>
            <person name="Liu E.T."/>
            <person name="Brusic V."/>
            <person name="Quackenbush J."/>
            <person name="Wahlestedt C."/>
            <person name="Mattick J.S."/>
            <person name="Hume D.A."/>
            <person name="Kai C."/>
            <person name="Sasaki D."/>
            <person name="Tomaru Y."/>
            <person name="Fukuda S."/>
            <person name="Kanamori-Katayama M."/>
            <person name="Suzuki M."/>
            <person name="Aoki J."/>
            <person name="Arakawa T."/>
            <person name="Iida J."/>
            <person name="Imamura K."/>
            <person name="Itoh M."/>
            <person name="Kato T."/>
            <person name="Kawaji H."/>
            <person name="Kawagashira N."/>
            <person name="Kawashima T."/>
            <person name="Kojima M."/>
            <person name="Kondo S."/>
            <person name="Konno H."/>
            <person name="Nakano K."/>
            <person name="Ninomiya N."/>
            <person name="Nishio T."/>
            <person name="Okada M."/>
            <person name="Plessy C."/>
            <person name="Shibata K."/>
            <person name="Shiraki T."/>
            <person name="Suzuki S."/>
            <person name="Tagami M."/>
            <person name="Waki K."/>
            <person name="Watahiki A."/>
            <person name="Okamura-Oho Y."/>
            <person name="Suzuki H."/>
            <person name="Kawai J."/>
            <person name="Hayashizaki Y."/>
        </authorList>
    </citation>
    <scope>NUCLEOTIDE SEQUENCE [LARGE SCALE MRNA] (ISOFORM 1)</scope>
    <source>
        <strain>C57BL/6J</strain>
        <tissue>Cerebellum</tissue>
    </source>
</reference>
<reference key="6">
    <citation type="journal article" date="2004" name="Genome Res.">
        <title>The status, quality, and expansion of the NIH full-length cDNA project: the Mammalian Gene Collection (MGC).</title>
        <authorList>
            <consortium name="The MGC Project Team"/>
        </authorList>
    </citation>
    <scope>NUCLEOTIDE SEQUENCE [LARGE SCALE MRNA] (ISOFORM 1)</scope>
    <source>
        <tissue>Eye</tissue>
    </source>
</reference>
<reference key="7">
    <citation type="journal article" date="1999" name="Proc. Natl. Acad. Sci. U.S.A.">
        <title>RING fingers mediate ubiquitin-conjugating enzyme (E2)-dependent ubiquitination.</title>
        <authorList>
            <person name="Lorick K.L."/>
            <person name="Jensen J.P."/>
            <person name="Fang S."/>
            <person name="Ong A.M."/>
            <person name="Hatakeyama S."/>
            <person name="Weissman A.M."/>
        </authorList>
    </citation>
    <scope>FUNCTION AS A UBIQUITATION LIGASE</scope>
    <scope>MUTAGENESIS OF HIS-553</scope>
</reference>
<reference key="8">
    <citation type="journal article" date="2002" name="Genomics">
        <title>PJA1, encoding a RING-H2 finger ubiquitin ligase, is a novel human X chromosome gene abundantly expressed in brain.</title>
        <authorList>
            <person name="Yu P."/>
            <person name="Chen Y."/>
            <person name="Tagle D.A."/>
            <person name="Cai T."/>
        </authorList>
    </citation>
    <scope>FUNCTION</scope>
    <scope>INTERACTION WITH UBE2D2</scope>
</reference>
<reference key="9">
    <citation type="journal article" date="2002" name="J. Biol. Chem.">
        <title>A RING finger protein Praja1 regulates Dlx5-dependent transcription through its ubiquitin ligase activity for the Dlx/Msx-interacting MAGE/Necdin family protein, Dlxin-1.</title>
        <authorList>
            <person name="Sasaki A."/>
            <person name="Masuda Y."/>
            <person name="Iwai K."/>
            <person name="Ikeda K."/>
            <person name="Watanabe K."/>
        </authorList>
    </citation>
    <scope>INTERACTION WITH MAGED1</scope>
    <scope>MUTAGENESIS OF CYS-533</scope>
</reference>
<reference key="10">
    <citation type="journal article" date="2010" name="Cell">
        <title>A tissue-specific atlas of mouse protein phosphorylation and expression.</title>
        <authorList>
            <person name="Huttlin E.L."/>
            <person name="Jedrychowski M.P."/>
            <person name="Elias J.E."/>
            <person name="Goswami T."/>
            <person name="Rad R."/>
            <person name="Beausoleil S.A."/>
            <person name="Villen J."/>
            <person name="Haas W."/>
            <person name="Sowa M.E."/>
            <person name="Gygi S.P."/>
        </authorList>
    </citation>
    <scope>PHOSPHORYLATION [LARGE SCALE ANALYSIS] AT THR-231; SER-317 AND SER-319</scope>
    <scope>IDENTIFICATION BY MASS SPECTROMETRY [LARGE SCALE ANALYSIS]</scope>
    <source>
        <tissue>Brain</tissue>
        <tissue>Heart</tissue>
        <tissue>Kidney</tissue>
        <tissue>Liver</tissue>
        <tissue>Spleen</tissue>
        <tissue>Testis</tissue>
    </source>
</reference>
<keyword id="KW-0025">Alternative splicing</keyword>
<keyword id="KW-0479">Metal-binding</keyword>
<keyword id="KW-0597">Phosphoprotein</keyword>
<keyword id="KW-1185">Reference proteome</keyword>
<keyword id="KW-0808">Transferase</keyword>
<keyword id="KW-0832">Ubl conjugation</keyword>
<keyword id="KW-0833">Ubl conjugation pathway</keyword>
<keyword id="KW-0862">Zinc</keyword>
<keyword id="KW-0863">Zinc-finger</keyword>
<accession>O55176</accession>
<accession>Q8CFU2</accession>
<accession>Q99MJ1</accession>
<accession>Q99MJ2</accession>
<accession>Q99MJ3</accession>
<accession>Q9DB04</accession>
<evidence type="ECO:0000255" key="1">
    <source>
        <dbReference type="PROSITE-ProRule" id="PRU00175"/>
    </source>
</evidence>
<evidence type="ECO:0000256" key="2">
    <source>
        <dbReference type="SAM" id="MobiDB-lite"/>
    </source>
</evidence>
<evidence type="ECO:0000269" key="3">
    <source>
    </source>
</evidence>
<evidence type="ECO:0000269" key="4">
    <source>
    </source>
</evidence>
<evidence type="ECO:0000269" key="5">
    <source>
    </source>
</evidence>
<evidence type="ECO:0000303" key="6">
    <source>
    </source>
</evidence>
<evidence type="ECO:0000303" key="7">
    <source>
    </source>
</evidence>
<evidence type="ECO:0000305" key="8"/>
<evidence type="ECO:0007744" key="9">
    <source>
    </source>
</evidence>
<dbReference type="EC" id="2.3.2.27"/>
<dbReference type="EMBL" id="U06944">
    <property type="protein sequence ID" value="AAC00205.2"/>
    <property type="molecule type" value="mRNA"/>
</dbReference>
<dbReference type="EMBL" id="AF335250">
    <property type="protein sequence ID" value="AAK15764.2"/>
    <property type="molecule type" value="mRNA"/>
</dbReference>
<dbReference type="EMBL" id="AF335251">
    <property type="protein sequence ID" value="AAK15765.2"/>
    <property type="molecule type" value="mRNA"/>
</dbReference>
<dbReference type="EMBL" id="AF335252">
    <property type="protein sequence ID" value="AAK15766.1"/>
    <property type="molecule type" value="mRNA"/>
</dbReference>
<dbReference type="EMBL" id="AK005373">
    <property type="protein sequence ID" value="BAB23982.1"/>
    <property type="molecule type" value="mRNA"/>
</dbReference>
<dbReference type="EMBL" id="BC037616">
    <property type="protein sequence ID" value="AAH37616.1"/>
    <property type="molecule type" value="mRNA"/>
</dbReference>
<dbReference type="CCDS" id="CCDS41070.1">
    <molecule id="O55176-3"/>
</dbReference>
<dbReference type="RefSeq" id="NP_001076579.1">
    <molecule id="O55176-3"/>
    <property type="nucleotide sequence ID" value="NM_001083110.3"/>
</dbReference>
<dbReference type="RefSeq" id="NP_001412854.1">
    <molecule id="O55176-3"/>
    <property type="nucleotide sequence ID" value="NM_001425925.1"/>
</dbReference>
<dbReference type="RefSeq" id="NP_032879.2">
    <property type="nucleotide sequence ID" value="NM_008853.3"/>
</dbReference>
<dbReference type="BMRB" id="O55176"/>
<dbReference type="SMR" id="O55176"/>
<dbReference type="BioGRID" id="202189">
    <property type="interactions" value="5"/>
</dbReference>
<dbReference type="FunCoup" id="O55176">
    <property type="interactions" value="489"/>
</dbReference>
<dbReference type="IntAct" id="O55176">
    <property type="interactions" value="3"/>
</dbReference>
<dbReference type="STRING" id="10090.ENSMUSP00000109423"/>
<dbReference type="ChEMBL" id="CHEMBL4879417"/>
<dbReference type="GlyGen" id="O55176">
    <property type="glycosylation" value="1 site, 1 N-linked glycan (1 site)"/>
</dbReference>
<dbReference type="iPTMnet" id="O55176"/>
<dbReference type="PhosphoSitePlus" id="O55176"/>
<dbReference type="SwissPalm" id="O55176"/>
<dbReference type="jPOST" id="O55176"/>
<dbReference type="PeptideAtlas" id="O55176"/>
<dbReference type="ProteomicsDB" id="287740">
    <molecule id="O55176-3"/>
</dbReference>
<dbReference type="ProteomicsDB" id="287741">
    <molecule id="O55176-2"/>
</dbReference>
<dbReference type="ProteomicsDB" id="287742">
    <molecule id="O55176-4"/>
</dbReference>
<dbReference type="ProteomicsDB" id="287743">
    <molecule id="O55176-5"/>
</dbReference>
<dbReference type="Pumba" id="O55176"/>
<dbReference type="Antibodypedia" id="402">
    <property type="antibodies" value="157 antibodies from 31 providers"/>
</dbReference>
<dbReference type="DNASU" id="18744"/>
<dbReference type="Ensembl" id="ENSMUST00000036354.7">
    <molecule id="O55176-3"/>
    <property type="protein sequence ID" value="ENSMUSP00000109420.2"/>
    <property type="gene ID" value="ENSMUSG00000034403.17"/>
</dbReference>
<dbReference type="Ensembl" id="ENSMUST00000113792.2">
    <molecule id="O55176-3"/>
    <property type="protein sequence ID" value="ENSMUSP00000109423.2"/>
    <property type="gene ID" value="ENSMUSG00000034403.17"/>
</dbReference>
<dbReference type="Ensembl" id="ENSMUST00000167246.2">
    <molecule id="O55176-3"/>
    <property type="protein sequence ID" value="ENSMUSP00000132393.2"/>
    <property type="gene ID" value="ENSMUSG00000034403.17"/>
</dbReference>
<dbReference type="GeneID" id="18744"/>
<dbReference type="KEGG" id="mmu:18744"/>
<dbReference type="UCSC" id="uc009tvl.1">
    <molecule id="O55176-3"/>
    <property type="organism name" value="mouse"/>
</dbReference>
<dbReference type="AGR" id="MGI:1101765"/>
<dbReference type="CTD" id="64219"/>
<dbReference type="MGI" id="MGI:1101765">
    <property type="gene designation" value="Pja1"/>
</dbReference>
<dbReference type="VEuPathDB" id="HostDB:ENSMUSG00000034403"/>
<dbReference type="eggNOG" id="KOG0800">
    <property type="taxonomic scope" value="Eukaryota"/>
</dbReference>
<dbReference type="GeneTree" id="ENSGT00940000154585"/>
<dbReference type="HOGENOM" id="CLU_026830_1_0_1"/>
<dbReference type="InParanoid" id="O55176"/>
<dbReference type="OMA" id="ICCSEYA"/>
<dbReference type="OrthoDB" id="21204at2759"/>
<dbReference type="PhylomeDB" id="O55176"/>
<dbReference type="Reactome" id="R-MMU-983168">
    <property type="pathway name" value="Antigen processing: Ubiquitination &amp; Proteasome degradation"/>
</dbReference>
<dbReference type="BioGRID-ORCS" id="18744">
    <property type="hits" value="0 hits in 80 CRISPR screens"/>
</dbReference>
<dbReference type="ChiTaRS" id="Pja1">
    <property type="organism name" value="mouse"/>
</dbReference>
<dbReference type="PRO" id="PR:O55176"/>
<dbReference type="Proteomes" id="UP000000589">
    <property type="component" value="Chromosome X"/>
</dbReference>
<dbReference type="RNAct" id="O55176">
    <property type="molecule type" value="protein"/>
</dbReference>
<dbReference type="Bgee" id="ENSMUSG00000034403">
    <property type="expression patterns" value="Expressed in substantia propria of cornea and 284 other cell types or tissues"/>
</dbReference>
<dbReference type="ExpressionAtlas" id="O55176">
    <property type="expression patterns" value="baseline and differential"/>
</dbReference>
<dbReference type="GO" id="GO:0005737">
    <property type="term" value="C:cytoplasm"/>
    <property type="evidence" value="ECO:0000314"/>
    <property type="project" value="MGI"/>
</dbReference>
<dbReference type="GO" id="GO:0061630">
    <property type="term" value="F:ubiquitin protein ligase activity"/>
    <property type="evidence" value="ECO:0000314"/>
    <property type="project" value="MGI"/>
</dbReference>
<dbReference type="GO" id="GO:0008270">
    <property type="term" value="F:zinc ion binding"/>
    <property type="evidence" value="ECO:0007669"/>
    <property type="project" value="UniProtKB-KW"/>
</dbReference>
<dbReference type="GO" id="GO:0030163">
    <property type="term" value="P:protein catabolic process"/>
    <property type="evidence" value="ECO:0000314"/>
    <property type="project" value="MGI"/>
</dbReference>
<dbReference type="CDD" id="cd16465">
    <property type="entry name" value="RING-H2_PJA1_2"/>
    <property type="match status" value="1"/>
</dbReference>
<dbReference type="FunFam" id="3.30.40.10:FF:000152">
    <property type="entry name" value="E3 ubiquitin-protein ligase Praja-1 isoform X1"/>
    <property type="match status" value="1"/>
</dbReference>
<dbReference type="Gene3D" id="3.30.40.10">
    <property type="entry name" value="Zinc/RING finger domain, C3HC4 (zinc finger)"/>
    <property type="match status" value="1"/>
</dbReference>
<dbReference type="InterPro" id="IPR001841">
    <property type="entry name" value="Znf_RING"/>
</dbReference>
<dbReference type="InterPro" id="IPR013083">
    <property type="entry name" value="Znf_RING/FYVE/PHD"/>
</dbReference>
<dbReference type="PANTHER" id="PTHR15710">
    <property type="entry name" value="E3 UBIQUITIN-PROTEIN LIGASE PRAJA"/>
    <property type="match status" value="1"/>
</dbReference>
<dbReference type="PANTHER" id="PTHR15710:SF2">
    <property type="entry name" value="E3 UBIQUITIN-PROTEIN LIGASE PRAJA-1"/>
    <property type="match status" value="1"/>
</dbReference>
<dbReference type="Pfam" id="PF13639">
    <property type="entry name" value="zf-RING_2"/>
    <property type="match status" value="1"/>
</dbReference>
<dbReference type="SMART" id="SM00184">
    <property type="entry name" value="RING"/>
    <property type="match status" value="1"/>
</dbReference>
<dbReference type="SUPFAM" id="SSF57850">
    <property type="entry name" value="RING/U-box"/>
    <property type="match status" value="1"/>
</dbReference>
<dbReference type="PROSITE" id="PS50089">
    <property type="entry name" value="ZF_RING_2"/>
    <property type="match status" value="1"/>
</dbReference>
<gene>
    <name type="primary">Pja1</name>
</gene>
<feature type="chain" id="PRO_0000056000" description="E3 ubiquitin-protein ligase Praja-1">
    <location>
        <begin position="1"/>
        <end position="578"/>
    </location>
</feature>
<feature type="zinc finger region" description="RING-type" evidence="1">
    <location>
        <begin position="530"/>
        <end position="571"/>
    </location>
</feature>
<feature type="region of interest" description="Disordered" evidence="2">
    <location>
        <begin position="1"/>
        <end position="298"/>
    </location>
</feature>
<feature type="region of interest" description="Disordered" evidence="2">
    <location>
        <begin position="332"/>
        <end position="397"/>
    </location>
</feature>
<feature type="compositionally biased region" description="Basic and acidic residues" evidence="2">
    <location>
        <begin position="57"/>
        <end position="67"/>
    </location>
</feature>
<feature type="compositionally biased region" description="Basic and acidic residues" evidence="2">
    <location>
        <begin position="107"/>
        <end position="116"/>
    </location>
</feature>
<feature type="compositionally biased region" description="Polar residues" evidence="2">
    <location>
        <begin position="151"/>
        <end position="163"/>
    </location>
</feature>
<feature type="compositionally biased region" description="Basic and acidic residues" evidence="2">
    <location>
        <begin position="243"/>
        <end position="264"/>
    </location>
</feature>
<feature type="compositionally biased region" description="Basic and acidic residues" evidence="2">
    <location>
        <begin position="273"/>
        <end position="290"/>
    </location>
</feature>
<feature type="compositionally biased region" description="Low complexity" evidence="2">
    <location>
        <begin position="359"/>
        <end position="373"/>
    </location>
</feature>
<feature type="compositionally biased region" description="Acidic residues" evidence="2">
    <location>
        <begin position="377"/>
        <end position="395"/>
    </location>
</feature>
<feature type="modified residue" description="Phosphothreonine" evidence="9">
    <location>
        <position position="231"/>
    </location>
</feature>
<feature type="modified residue" description="Phosphoserine" evidence="9">
    <location>
        <position position="317"/>
    </location>
</feature>
<feature type="modified residue" description="Phosphoserine" evidence="9">
    <location>
        <position position="319"/>
    </location>
</feature>
<feature type="splice variant" id="VSP_007519" description="In isoform 2." evidence="7">
    <location>
        <begin position="60"/>
        <end position="243"/>
    </location>
</feature>
<feature type="splice variant" id="VSP_022011" description="In isoform 4." evidence="6">
    <original>ARP</original>
    <variation>PLF</variation>
    <location>
        <begin position="185"/>
        <end position="187"/>
    </location>
</feature>
<feature type="splice variant" id="VSP_007520" description="In isoform 4." evidence="6">
    <location>
        <begin position="188"/>
        <end position="578"/>
    </location>
</feature>
<feature type="splice variant" id="VSP_007521" description="In isoform 3." evidence="6">
    <location>
        <begin position="197"/>
        <end position="411"/>
    </location>
</feature>
<feature type="mutagenesis site" description="No effect on MAGED1 binding. Decrease in ubiquitination of MAGED1. No inhibition of DLX5-dependent transcriptional activity." evidence="4">
    <original>C</original>
    <variation>A</variation>
    <location>
        <position position="533"/>
    </location>
</feature>
<feature type="mutagenesis site" description="Loss of ubiquitination activity." evidence="3">
    <original>H</original>
    <variation>S</variation>
    <location>
        <position position="553"/>
    </location>
</feature>
<feature type="sequence conflict" description="In Ref. 3; AAK15764." evidence="8" ref="3">
    <original>D</original>
    <variation>DD</variation>
    <location>
        <position position="236"/>
    </location>
</feature>
<feature type="sequence conflict" description="In Ref. 5; BAB23982." evidence="8" ref="5">
    <original>I</original>
    <variation>M</variation>
    <location>
        <position position="515"/>
    </location>
</feature>
<feature type="sequence conflict" description="In Ref. 3; AAK15764/AAK15765." evidence="8" ref="3">
    <original>A</original>
    <variation>T</variation>
    <location>
        <position position="523"/>
    </location>
</feature>
<name>PJA1_MOUSE</name>
<comment type="function">
    <text evidence="3 5">Has E2-dependent E3 ubiquitin-protein ligase activity. Ubiquitinates MAGED1 antigen leading to its subsequent degradation by proteasome. May be involved in protein sorting.</text>
</comment>
<comment type="catalytic activity">
    <reaction>
        <text>S-ubiquitinyl-[E2 ubiquitin-conjugating enzyme]-L-cysteine + [acceptor protein]-L-lysine = [E2 ubiquitin-conjugating enzyme]-L-cysteine + N(6)-ubiquitinyl-[acceptor protein]-L-lysine.</text>
        <dbReference type="EC" id="2.3.2.27"/>
    </reaction>
</comment>
<comment type="subunit">
    <text evidence="4 5">Binds ubiquitin-conjugating enzymes (E2s). Binds, in vitro and in vivo, the MAGE conserved domain of MAGED1. Binds weakly Necdin, in vitro. Interacts with UBE2D2.</text>
</comment>
<comment type="interaction">
    <interactant intactId="EBI-1801670">
        <id>O55176-2</id>
    </interactant>
    <interactant intactId="EBI-1801274">
        <id>Q9QYH6</id>
        <label>Maged1</label>
    </interactant>
    <organismsDiffer>false</organismsDiffer>
    <experiments>2</experiments>
</comment>
<comment type="alternative products">
    <event type="alternative splicing"/>
    <isoform>
        <id>O55176-3</id>
        <name>1</name>
        <name>Praja1a</name>
        <sequence type="displayed"/>
    </isoform>
    <isoform>
        <id>O55176-2</id>
        <name>2</name>
        <sequence type="described" ref="VSP_007519"/>
    </isoform>
    <isoform>
        <id>O55176-4</id>
        <name>3</name>
        <name>Praja1c</name>
        <sequence type="described" ref="VSP_007521"/>
    </isoform>
    <isoform>
        <id>O55176-5</id>
        <name>4</name>
        <name>Praja1d</name>
        <sequence type="described" ref="VSP_022011 VSP_007520"/>
    </isoform>
    <text>Alternative splicing appears to be tissue-specific.</text>
</comment>
<comment type="tissue specificity">
    <text>Expressed in brain, liver, kidney. Highest levels in brain where it is found in many regions including cortical and subcortical areas and in neurons of the amygdala. Weak expression also found in testis. Also expressed in developing embryo.</text>
</comment>
<comment type="induction">
    <text>By fear memory. Differential induction of isoforms.</text>
</comment>
<comment type="domain">
    <text>The RING-type zinc finger domain interacts with an ubiquitin-conjugating enzyme (E2) and facilitates ubiquitination.</text>
</comment>
<comment type="PTM">
    <text>Substrate for E2-dependent ubiquitination.</text>
</comment>